<evidence type="ECO:0000255" key="1">
    <source>
        <dbReference type="HAMAP-Rule" id="MF_01645"/>
    </source>
</evidence>
<name>ALLB_ECOSM</name>
<sequence>MSFDLIIKNGTVILENEARVVDVAVKGGKIAAIGQDLGDAKEVMDASGLVVSPGMVDAHTHISEPGRSHWEGYETGTRAAAKGGITTMIEMPLNQLPATVDRASIELKFDAAKGKLTIDAAQLGGLVSYNIDRLHELDEVGVVGFKCFVATCGDRGIDNDFRDVNDWQFFKGAQKLGELGQPVLVHCENALICDELGEEAKREGRVTAHDYVASRPVFTEVEAIRRVLYLAKVAGCRLHVCHISSPEGVEEVTRARQEGQDVTCESCPHYFVLDTDQFEEIGTLAKCSPPIRDLENQKGMWEKLFNGEIDCLVSDHSPCPPEMKAGNIMKAWGGIAGLQSCMDVMFDEAVQKRGMSLPMFGKLMATNAADIFGLQQKGRIAPGKDADFVFIQPNSSYVLTNDDLEYRHKVSPYVGRTIGARITKTILRGDVIYDIEQGFPVAPKGQFILKHQQ</sequence>
<dbReference type="EC" id="3.5.2.5" evidence="1"/>
<dbReference type="EMBL" id="CP000970">
    <property type="protein sequence ID" value="ACB18542.1"/>
    <property type="molecule type" value="Genomic_DNA"/>
</dbReference>
<dbReference type="RefSeq" id="WP_000006912.1">
    <property type="nucleotide sequence ID" value="NC_010498.1"/>
</dbReference>
<dbReference type="SMR" id="B1LKD0"/>
<dbReference type="KEGG" id="ecm:EcSMS35_0554"/>
<dbReference type="HOGENOM" id="CLU_015572_4_2_6"/>
<dbReference type="UniPathway" id="UPA00395">
    <property type="reaction ID" value="UER00653"/>
</dbReference>
<dbReference type="Proteomes" id="UP000007011">
    <property type="component" value="Chromosome"/>
</dbReference>
<dbReference type="GO" id="GO:0005737">
    <property type="term" value="C:cytoplasm"/>
    <property type="evidence" value="ECO:0007669"/>
    <property type="project" value="TreeGrafter"/>
</dbReference>
<dbReference type="GO" id="GO:0004038">
    <property type="term" value="F:allantoinase activity"/>
    <property type="evidence" value="ECO:0007669"/>
    <property type="project" value="UniProtKB-UniRule"/>
</dbReference>
<dbReference type="GO" id="GO:0050897">
    <property type="term" value="F:cobalt ion binding"/>
    <property type="evidence" value="ECO:0007669"/>
    <property type="project" value="InterPro"/>
</dbReference>
<dbReference type="GO" id="GO:0008270">
    <property type="term" value="F:zinc ion binding"/>
    <property type="evidence" value="ECO:0007669"/>
    <property type="project" value="InterPro"/>
</dbReference>
<dbReference type="GO" id="GO:0000256">
    <property type="term" value="P:allantoin catabolic process"/>
    <property type="evidence" value="ECO:0007669"/>
    <property type="project" value="UniProtKB-UniRule"/>
</dbReference>
<dbReference type="GO" id="GO:0006145">
    <property type="term" value="P:purine nucleobase catabolic process"/>
    <property type="evidence" value="ECO:0007669"/>
    <property type="project" value="TreeGrafter"/>
</dbReference>
<dbReference type="CDD" id="cd01315">
    <property type="entry name" value="L-HYD_ALN"/>
    <property type="match status" value="1"/>
</dbReference>
<dbReference type="FunFam" id="3.20.20.140:FF:000013">
    <property type="entry name" value="Allantoinase"/>
    <property type="match status" value="1"/>
</dbReference>
<dbReference type="Gene3D" id="3.20.20.140">
    <property type="entry name" value="Metal-dependent hydrolases"/>
    <property type="match status" value="1"/>
</dbReference>
<dbReference type="Gene3D" id="2.30.40.10">
    <property type="entry name" value="Urease, subunit C, domain 1"/>
    <property type="match status" value="1"/>
</dbReference>
<dbReference type="HAMAP" id="MF_01645">
    <property type="entry name" value="Hydantoinase"/>
    <property type="match status" value="1"/>
</dbReference>
<dbReference type="InterPro" id="IPR017593">
    <property type="entry name" value="Allantoinase"/>
</dbReference>
<dbReference type="InterPro" id="IPR047604">
    <property type="entry name" value="Allantoinase_bact"/>
</dbReference>
<dbReference type="InterPro" id="IPR006680">
    <property type="entry name" value="Amidohydro-rel"/>
</dbReference>
<dbReference type="InterPro" id="IPR050138">
    <property type="entry name" value="DHOase/Allantoinase_Hydrolase"/>
</dbReference>
<dbReference type="InterPro" id="IPR011059">
    <property type="entry name" value="Metal-dep_hydrolase_composite"/>
</dbReference>
<dbReference type="InterPro" id="IPR032466">
    <property type="entry name" value="Metal_Hydrolase"/>
</dbReference>
<dbReference type="NCBIfam" id="TIGR03178">
    <property type="entry name" value="allantoinase"/>
    <property type="match status" value="1"/>
</dbReference>
<dbReference type="NCBIfam" id="NF005960">
    <property type="entry name" value="PRK08044.1"/>
    <property type="match status" value="1"/>
</dbReference>
<dbReference type="PANTHER" id="PTHR43668">
    <property type="entry name" value="ALLANTOINASE"/>
    <property type="match status" value="1"/>
</dbReference>
<dbReference type="PANTHER" id="PTHR43668:SF4">
    <property type="entry name" value="ALLANTOINASE"/>
    <property type="match status" value="1"/>
</dbReference>
<dbReference type="Pfam" id="PF01979">
    <property type="entry name" value="Amidohydro_1"/>
    <property type="match status" value="1"/>
</dbReference>
<dbReference type="SUPFAM" id="SSF51338">
    <property type="entry name" value="Composite domain of metallo-dependent hydrolases"/>
    <property type="match status" value="1"/>
</dbReference>
<dbReference type="SUPFAM" id="SSF51556">
    <property type="entry name" value="Metallo-dependent hydrolases"/>
    <property type="match status" value="1"/>
</dbReference>
<feature type="chain" id="PRO_1000186925" description="Allantoinase">
    <location>
        <begin position="1"/>
        <end position="453"/>
    </location>
</feature>
<feature type="binding site" evidence="1">
    <location>
        <position position="59"/>
    </location>
    <ligand>
        <name>Zn(2+)</name>
        <dbReference type="ChEBI" id="CHEBI:29105"/>
        <label>1</label>
    </ligand>
</feature>
<feature type="binding site" evidence="1">
    <location>
        <position position="61"/>
    </location>
    <ligand>
        <name>Zn(2+)</name>
        <dbReference type="ChEBI" id="CHEBI:29105"/>
        <label>1</label>
    </ligand>
</feature>
<feature type="binding site" description="via carbamate group" evidence="1">
    <location>
        <position position="146"/>
    </location>
    <ligand>
        <name>Zn(2+)</name>
        <dbReference type="ChEBI" id="CHEBI:29105"/>
        <label>1</label>
    </ligand>
</feature>
<feature type="binding site" description="via carbamate group" evidence="1">
    <location>
        <position position="146"/>
    </location>
    <ligand>
        <name>Zn(2+)</name>
        <dbReference type="ChEBI" id="CHEBI:29105"/>
        <label>2</label>
    </ligand>
</feature>
<feature type="binding site" evidence="1">
    <location>
        <position position="186"/>
    </location>
    <ligand>
        <name>Zn(2+)</name>
        <dbReference type="ChEBI" id="CHEBI:29105"/>
        <label>2</label>
    </ligand>
</feature>
<feature type="binding site" evidence="1">
    <location>
        <position position="242"/>
    </location>
    <ligand>
        <name>Zn(2+)</name>
        <dbReference type="ChEBI" id="CHEBI:29105"/>
        <label>2</label>
    </ligand>
</feature>
<feature type="binding site" evidence="1">
    <location>
        <position position="315"/>
    </location>
    <ligand>
        <name>Zn(2+)</name>
        <dbReference type="ChEBI" id="CHEBI:29105"/>
        <label>1</label>
    </ligand>
</feature>
<feature type="modified residue" description="N6-carboxylysine" evidence="1">
    <location>
        <position position="146"/>
    </location>
</feature>
<organism>
    <name type="scientific">Escherichia coli (strain SMS-3-5 / SECEC)</name>
    <dbReference type="NCBI Taxonomy" id="439855"/>
    <lineage>
        <taxon>Bacteria</taxon>
        <taxon>Pseudomonadati</taxon>
        <taxon>Pseudomonadota</taxon>
        <taxon>Gammaproteobacteria</taxon>
        <taxon>Enterobacterales</taxon>
        <taxon>Enterobacteriaceae</taxon>
        <taxon>Escherichia</taxon>
    </lineage>
</organism>
<proteinExistence type="inferred from homology"/>
<gene>
    <name evidence="1" type="primary">allB</name>
    <name type="ordered locus">EcSMS35_0554</name>
</gene>
<protein>
    <recommendedName>
        <fullName evidence="1">Allantoinase</fullName>
        <ecNumber evidence="1">3.5.2.5</ecNumber>
    </recommendedName>
    <alternativeName>
        <fullName evidence="1">Allantoin-utilizing enzyme</fullName>
    </alternativeName>
</protein>
<comment type="function">
    <text evidence="1">Catalyzes the conversion of allantoin (5-ureidohydantoin) to allantoic acid by hydrolytic cleavage of the five-member hydantoin ring.</text>
</comment>
<comment type="catalytic activity">
    <reaction evidence="1">
        <text>(S)-allantoin + H2O = allantoate + H(+)</text>
        <dbReference type="Rhea" id="RHEA:17029"/>
        <dbReference type="ChEBI" id="CHEBI:15377"/>
        <dbReference type="ChEBI" id="CHEBI:15378"/>
        <dbReference type="ChEBI" id="CHEBI:15678"/>
        <dbReference type="ChEBI" id="CHEBI:17536"/>
        <dbReference type="EC" id="3.5.2.5"/>
    </reaction>
</comment>
<comment type="cofactor">
    <cofactor evidence="1">
        <name>Zn(2+)</name>
        <dbReference type="ChEBI" id="CHEBI:29105"/>
    </cofactor>
    <text evidence="1">Binds 2 Zn(2+) ions per subunit.</text>
</comment>
<comment type="pathway">
    <text evidence="1">Nitrogen metabolism; (S)-allantoin degradation; allantoate from (S)-allantoin: step 1/1.</text>
</comment>
<comment type="subunit">
    <text evidence="1">Homotetramer.</text>
</comment>
<comment type="PTM">
    <text evidence="1">Carboxylation allows a single lysine to coordinate two zinc ions.</text>
</comment>
<comment type="similarity">
    <text evidence="1">Belongs to the metallo-dependent hydrolases superfamily. Allantoinase family.</text>
</comment>
<reference key="1">
    <citation type="journal article" date="2008" name="J. Bacteriol.">
        <title>Insights into the environmental resistance gene pool from the genome sequence of the multidrug-resistant environmental isolate Escherichia coli SMS-3-5.</title>
        <authorList>
            <person name="Fricke W.F."/>
            <person name="Wright M.S."/>
            <person name="Lindell A.H."/>
            <person name="Harkins D.M."/>
            <person name="Baker-Austin C."/>
            <person name="Ravel J."/>
            <person name="Stepanauskas R."/>
        </authorList>
    </citation>
    <scope>NUCLEOTIDE SEQUENCE [LARGE SCALE GENOMIC DNA]</scope>
    <source>
        <strain>SMS-3-5 / SECEC</strain>
    </source>
</reference>
<keyword id="KW-0378">Hydrolase</keyword>
<keyword id="KW-0479">Metal-binding</keyword>
<keyword id="KW-0659">Purine metabolism</keyword>
<keyword id="KW-0862">Zinc</keyword>
<accession>B1LKD0</accession>